<gene>
    <name evidence="4" type="primary">CEST</name>
    <name evidence="5" type="ORF">OsI_04075</name>
</gene>
<accession>B8AAV3</accession>
<proteinExistence type="inferred from homology"/>
<evidence type="ECO:0000250" key="1">
    <source>
        <dbReference type="UniProtKB" id="Q5VQK9"/>
    </source>
</evidence>
<evidence type="ECO:0000255" key="2"/>
<evidence type="ECO:0000256" key="3">
    <source>
        <dbReference type="SAM" id="MobiDB-lite"/>
    </source>
</evidence>
<evidence type="ECO:0000305" key="4"/>
<evidence type="ECO:0000312" key="5">
    <source>
        <dbReference type="EMBL" id="EEC71642.1"/>
    </source>
</evidence>
<sequence length="292" mass="31763">MALLSPPSPPPPLPPLRRRPASPTLLAVATRPSSLLSLPHCHCGLPLPSTANARAYSRSSRRRRRVAASLGQDEPGVSDTAVAPEGEGDSEPPASSDGAAGDIASSAEQPEASPEDLEDIRQVKRVLELLQKNRDMTFGEVKLTIMIEDPRDIERKRLLGIEDPDEITRDDLADALVEVNEGRIPENRVALQLLAKEMTEWPDLEMEAPKKKSKPGKSVYAKATDTGIDPETAAKRLNIDWDSAADLDDEEEEDDETEVPSAVGYSALYLLTAFPVIIGISVVLILFYNSLQ</sequence>
<name>CEST_ORYSI</name>
<organism>
    <name type="scientific">Oryza sativa subsp. indica</name>
    <name type="common">Rice</name>
    <dbReference type="NCBI Taxonomy" id="39946"/>
    <lineage>
        <taxon>Eukaryota</taxon>
        <taxon>Viridiplantae</taxon>
        <taxon>Streptophyta</taxon>
        <taxon>Embryophyta</taxon>
        <taxon>Tracheophyta</taxon>
        <taxon>Spermatophyta</taxon>
        <taxon>Magnoliopsida</taxon>
        <taxon>Liliopsida</taxon>
        <taxon>Poales</taxon>
        <taxon>Poaceae</taxon>
        <taxon>BOP clade</taxon>
        <taxon>Oryzoideae</taxon>
        <taxon>Oryzeae</taxon>
        <taxon>Oryzinae</taxon>
        <taxon>Oryza</taxon>
        <taxon>Oryza sativa</taxon>
    </lineage>
</organism>
<feature type="transit peptide" description="Chloroplast" evidence="2">
    <location>
        <begin position="1"/>
        <end position="67"/>
    </location>
</feature>
<feature type="chain" id="PRO_0000433224" description="Protein CHLOROPLAST ENHANCING STRESS TOLERANCE, chloroplastic" evidence="2">
    <location>
        <begin position="68"/>
        <end position="292"/>
    </location>
</feature>
<feature type="transmembrane region" description="Helical" evidence="2">
    <location>
        <begin position="267"/>
        <end position="287"/>
    </location>
</feature>
<feature type="region of interest" description="Disordered" evidence="3">
    <location>
        <begin position="1"/>
        <end position="119"/>
    </location>
</feature>
<feature type="region of interest" description="Disordered" evidence="3">
    <location>
        <begin position="206"/>
        <end position="225"/>
    </location>
</feature>
<feature type="compositionally biased region" description="Pro residues" evidence="3">
    <location>
        <begin position="1"/>
        <end position="15"/>
    </location>
</feature>
<feature type="compositionally biased region" description="Low complexity" evidence="3">
    <location>
        <begin position="49"/>
        <end position="58"/>
    </location>
</feature>
<feature type="compositionally biased region" description="Low complexity" evidence="3">
    <location>
        <begin position="94"/>
        <end position="107"/>
    </location>
</feature>
<keyword id="KW-0150">Chloroplast</keyword>
<keyword id="KW-0472">Membrane</keyword>
<keyword id="KW-0934">Plastid</keyword>
<keyword id="KW-1185">Reference proteome</keyword>
<keyword id="KW-0793">Thylakoid</keyword>
<keyword id="KW-0809">Transit peptide</keyword>
<keyword id="KW-0812">Transmembrane</keyword>
<keyword id="KW-1133">Transmembrane helix</keyword>
<comment type="function">
    <text evidence="1">Involved in light-induced chloroplast development and growth. Involved in the plant response to abiotic and photooxidative stresses. May be involved in the suppression of photooxidative damage.</text>
</comment>
<comment type="subcellular location">
    <subcellularLocation>
        <location evidence="1">Plastid</location>
        <location evidence="1">Chloroplast thylakoid membrane</location>
        <topology evidence="2">Single-pass membrane protein</topology>
    </subcellularLocation>
</comment>
<comment type="similarity">
    <text evidence="4">Belongs to the Y3IP1/CEST family.</text>
</comment>
<protein>
    <recommendedName>
        <fullName evidence="4">Protein CHLOROPLAST ENHANCING STRESS TOLERANCE, chloroplastic</fullName>
        <shortName evidence="4">OsCEST</shortName>
    </recommendedName>
</protein>
<reference key="1">
    <citation type="journal article" date="2005" name="PLoS Biol.">
        <title>The genomes of Oryza sativa: a history of duplications.</title>
        <authorList>
            <person name="Yu J."/>
            <person name="Wang J."/>
            <person name="Lin W."/>
            <person name="Li S."/>
            <person name="Li H."/>
            <person name="Zhou J."/>
            <person name="Ni P."/>
            <person name="Dong W."/>
            <person name="Hu S."/>
            <person name="Zeng C."/>
            <person name="Zhang J."/>
            <person name="Zhang Y."/>
            <person name="Li R."/>
            <person name="Xu Z."/>
            <person name="Li S."/>
            <person name="Li X."/>
            <person name="Zheng H."/>
            <person name="Cong L."/>
            <person name="Lin L."/>
            <person name="Yin J."/>
            <person name="Geng J."/>
            <person name="Li G."/>
            <person name="Shi J."/>
            <person name="Liu J."/>
            <person name="Lv H."/>
            <person name="Li J."/>
            <person name="Wang J."/>
            <person name="Deng Y."/>
            <person name="Ran L."/>
            <person name="Shi X."/>
            <person name="Wang X."/>
            <person name="Wu Q."/>
            <person name="Li C."/>
            <person name="Ren X."/>
            <person name="Wang J."/>
            <person name="Wang X."/>
            <person name="Li D."/>
            <person name="Liu D."/>
            <person name="Zhang X."/>
            <person name="Ji Z."/>
            <person name="Zhao W."/>
            <person name="Sun Y."/>
            <person name="Zhang Z."/>
            <person name="Bao J."/>
            <person name="Han Y."/>
            <person name="Dong L."/>
            <person name="Ji J."/>
            <person name="Chen P."/>
            <person name="Wu S."/>
            <person name="Liu J."/>
            <person name="Xiao Y."/>
            <person name="Bu D."/>
            <person name="Tan J."/>
            <person name="Yang L."/>
            <person name="Ye C."/>
            <person name="Zhang J."/>
            <person name="Xu J."/>
            <person name="Zhou Y."/>
            <person name="Yu Y."/>
            <person name="Zhang B."/>
            <person name="Zhuang S."/>
            <person name="Wei H."/>
            <person name="Liu B."/>
            <person name="Lei M."/>
            <person name="Yu H."/>
            <person name="Li Y."/>
            <person name="Xu H."/>
            <person name="Wei S."/>
            <person name="He X."/>
            <person name="Fang L."/>
            <person name="Zhang Z."/>
            <person name="Zhang Y."/>
            <person name="Huang X."/>
            <person name="Su Z."/>
            <person name="Tong W."/>
            <person name="Li J."/>
            <person name="Tong Z."/>
            <person name="Li S."/>
            <person name="Ye J."/>
            <person name="Wang L."/>
            <person name="Fang L."/>
            <person name="Lei T."/>
            <person name="Chen C.-S."/>
            <person name="Chen H.-C."/>
            <person name="Xu Z."/>
            <person name="Li H."/>
            <person name="Huang H."/>
            <person name="Zhang F."/>
            <person name="Xu H."/>
            <person name="Li N."/>
            <person name="Zhao C."/>
            <person name="Li S."/>
            <person name="Dong L."/>
            <person name="Huang Y."/>
            <person name="Li L."/>
            <person name="Xi Y."/>
            <person name="Qi Q."/>
            <person name="Li W."/>
            <person name="Zhang B."/>
            <person name="Hu W."/>
            <person name="Zhang Y."/>
            <person name="Tian X."/>
            <person name="Jiao Y."/>
            <person name="Liang X."/>
            <person name="Jin J."/>
            <person name="Gao L."/>
            <person name="Zheng W."/>
            <person name="Hao B."/>
            <person name="Liu S.-M."/>
            <person name="Wang W."/>
            <person name="Yuan L."/>
            <person name="Cao M."/>
            <person name="McDermott J."/>
            <person name="Samudrala R."/>
            <person name="Wang J."/>
            <person name="Wong G.K.-S."/>
            <person name="Yang H."/>
        </authorList>
    </citation>
    <scope>NUCLEOTIDE SEQUENCE [LARGE SCALE GENOMIC DNA]</scope>
    <source>
        <strain>cv. 93-11</strain>
    </source>
</reference>
<dbReference type="EMBL" id="CM000126">
    <property type="protein sequence ID" value="EEC71642.1"/>
    <property type="molecule type" value="Genomic_DNA"/>
</dbReference>
<dbReference type="SMR" id="B8AAV3"/>
<dbReference type="STRING" id="39946.B8AAV3"/>
<dbReference type="EnsemblPlants" id="BGIOSGA004612-TA">
    <property type="protein sequence ID" value="BGIOSGA004612-PA"/>
    <property type="gene ID" value="BGIOSGA004612"/>
</dbReference>
<dbReference type="EnsemblPlants" id="OsLiXu_01g0035960.01">
    <property type="protein sequence ID" value="OsLiXu_01g0035960.01"/>
    <property type="gene ID" value="OsLiXu_01g0035960"/>
</dbReference>
<dbReference type="Gramene" id="BGIOSGA004612-TA">
    <property type="protein sequence ID" value="BGIOSGA004612-PA"/>
    <property type="gene ID" value="BGIOSGA004612"/>
</dbReference>
<dbReference type="Gramene" id="OsLiXu_01g0035960.01">
    <property type="protein sequence ID" value="OsLiXu_01g0035960.01"/>
    <property type="gene ID" value="OsLiXu_01g0035960"/>
</dbReference>
<dbReference type="HOGENOM" id="CLU_083736_0_0_1"/>
<dbReference type="OMA" id="KRLNVDW"/>
<dbReference type="Proteomes" id="UP000007015">
    <property type="component" value="Chromosome 1"/>
</dbReference>
<dbReference type="GO" id="GO:0009535">
    <property type="term" value="C:chloroplast thylakoid membrane"/>
    <property type="evidence" value="ECO:0007669"/>
    <property type="project" value="UniProtKB-SubCell"/>
</dbReference>
<dbReference type="GO" id="GO:0048564">
    <property type="term" value="P:photosystem I assembly"/>
    <property type="evidence" value="ECO:0007669"/>
    <property type="project" value="InterPro"/>
</dbReference>
<dbReference type="GO" id="GO:0080183">
    <property type="term" value="P:response to photooxidative stress"/>
    <property type="evidence" value="ECO:0007669"/>
    <property type="project" value="InterPro"/>
</dbReference>
<dbReference type="InterPro" id="IPR040340">
    <property type="entry name" value="CEST/Y3IP1"/>
</dbReference>
<dbReference type="PANTHER" id="PTHR33672">
    <property type="entry name" value="YCF3-INTERACTING PROTEIN 1, CHLOROPLASTIC"/>
    <property type="match status" value="1"/>
</dbReference>
<dbReference type="PANTHER" id="PTHR33672:SF3">
    <property type="entry name" value="YCF3-INTERACTING PROTEIN 1, CHLOROPLASTIC"/>
    <property type="match status" value="1"/>
</dbReference>